<keyword id="KW-0325">Glycoprotein</keyword>
<keyword id="KW-0472">Membrane</keyword>
<keyword id="KW-1185">Reference proteome</keyword>
<keyword id="KW-0812">Transmembrane</keyword>
<keyword id="KW-1133">Transmembrane helix</keyword>
<protein>
    <recommendedName>
        <fullName>Protein sigN139</fullName>
    </recommendedName>
    <alternativeName>
        <fullName>SrfA-induced gene N-like protein 139</fullName>
    </alternativeName>
</protein>
<proteinExistence type="predicted"/>
<reference key="1">
    <citation type="journal article" date="2005" name="Nature">
        <title>The genome of the social amoeba Dictyostelium discoideum.</title>
        <authorList>
            <person name="Eichinger L."/>
            <person name="Pachebat J.A."/>
            <person name="Gloeckner G."/>
            <person name="Rajandream M.A."/>
            <person name="Sucgang R."/>
            <person name="Berriman M."/>
            <person name="Song J."/>
            <person name="Olsen R."/>
            <person name="Szafranski K."/>
            <person name="Xu Q."/>
            <person name="Tunggal B."/>
            <person name="Kummerfeld S."/>
            <person name="Madera M."/>
            <person name="Konfortov B.A."/>
            <person name="Rivero F."/>
            <person name="Bankier A.T."/>
            <person name="Lehmann R."/>
            <person name="Hamlin N."/>
            <person name="Davies R."/>
            <person name="Gaudet P."/>
            <person name="Fey P."/>
            <person name="Pilcher K."/>
            <person name="Chen G."/>
            <person name="Saunders D."/>
            <person name="Sodergren E.J."/>
            <person name="Davis P."/>
            <person name="Kerhornou A."/>
            <person name="Nie X."/>
            <person name="Hall N."/>
            <person name="Anjard C."/>
            <person name="Hemphill L."/>
            <person name="Bason N."/>
            <person name="Farbrother P."/>
            <person name="Desany B."/>
            <person name="Just E."/>
            <person name="Morio T."/>
            <person name="Rost R."/>
            <person name="Churcher C.M."/>
            <person name="Cooper J."/>
            <person name="Haydock S."/>
            <person name="van Driessche N."/>
            <person name="Cronin A."/>
            <person name="Goodhead I."/>
            <person name="Muzny D.M."/>
            <person name="Mourier T."/>
            <person name="Pain A."/>
            <person name="Lu M."/>
            <person name="Harper D."/>
            <person name="Lindsay R."/>
            <person name="Hauser H."/>
            <person name="James K.D."/>
            <person name="Quiles M."/>
            <person name="Madan Babu M."/>
            <person name="Saito T."/>
            <person name="Buchrieser C."/>
            <person name="Wardroper A."/>
            <person name="Felder M."/>
            <person name="Thangavelu M."/>
            <person name="Johnson D."/>
            <person name="Knights A."/>
            <person name="Loulseged H."/>
            <person name="Mungall K.L."/>
            <person name="Oliver K."/>
            <person name="Price C."/>
            <person name="Quail M.A."/>
            <person name="Urushihara H."/>
            <person name="Hernandez J."/>
            <person name="Rabbinowitsch E."/>
            <person name="Steffen D."/>
            <person name="Sanders M."/>
            <person name="Ma J."/>
            <person name="Kohara Y."/>
            <person name="Sharp S."/>
            <person name="Simmonds M.N."/>
            <person name="Spiegler S."/>
            <person name="Tivey A."/>
            <person name="Sugano S."/>
            <person name="White B."/>
            <person name="Walker D."/>
            <person name="Woodward J.R."/>
            <person name="Winckler T."/>
            <person name="Tanaka Y."/>
            <person name="Shaulsky G."/>
            <person name="Schleicher M."/>
            <person name="Weinstock G.M."/>
            <person name="Rosenthal A."/>
            <person name="Cox E.C."/>
            <person name="Chisholm R.L."/>
            <person name="Gibbs R.A."/>
            <person name="Loomis W.F."/>
            <person name="Platzer M."/>
            <person name="Kay R.R."/>
            <person name="Williams J.G."/>
            <person name="Dear P.H."/>
            <person name="Noegel A.A."/>
            <person name="Barrell B.G."/>
            <person name="Kuspa A."/>
        </authorList>
    </citation>
    <scope>NUCLEOTIDE SEQUENCE [LARGE SCALE GENOMIC DNA]</scope>
    <source>
        <strain>AX4</strain>
    </source>
</reference>
<reference key="2">
    <citation type="journal article" date="2008" name="BMC Microbiol.">
        <title>Structural and functional studies of a family of Dictyostelium discoideum developmentally regulated, prestalk genes coding for small proteins.</title>
        <authorList>
            <person name="Vicente J.J."/>
            <person name="Galardi-Castilla M."/>
            <person name="Escalante R."/>
            <person name="Sastre L."/>
        </authorList>
    </citation>
    <scope>IDENTIFICATION</scope>
</reference>
<feature type="chain" id="PRO_0000394031" description="Protein sigN139">
    <location>
        <begin position="1"/>
        <end position="91"/>
    </location>
</feature>
<feature type="transmembrane region" description="Helical" evidence="1">
    <location>
        <begin position="46"/>
        <end position="68"/>
    </location>
</feature>
<feature type="glycosylation site" description="N-linked (GlcNAc...) asparagine" evidence="1">
    <location>
        <position position="23"/>
    </location>
</feature>
<feature type="glycosylation site" description="N-linked (GlcNAc...) asparagine" evidence="1">
    <location>
        <position position="34"/>
    </location>
</feature>
<name>SI139_DICDI</name>
<dbReference type="EMBL" id="AAFI02000109">
    <property type="protein sequence ID" value="EAL63323.1"/>
    <property type="molecule type" value="Genomic_DNA"/>
</dbReference>
<dbReference type="RefSeq" id="XP_636825.1">
    <property type="nucleotide sequence ID" value="XM_631733.1"/>
</dbReference>
<dbReference type="GlyGen" id="Q54JB1">
    <property type="glycosylation" value="2 sites"/>
</dbReference>
<dbReference type="PaxDb" id="44689-DDB0266556"/>
<dbReference type="EnsemblProtists" id="EAL63323">
    <property type="protein sequence ID" value="EAL63323"/>
    <property type="gene ID" value="DDB_G0288185"/>
</dbReference>
<dbReference type="GeneID" id="8626494"/>
<dbReference type="KEGG" id="ddi:DDB_G0288185"/>
<dbReference type="dictyBase" id="DDB_G0288185"/>
<dbReference type="VEuPathDB" id="AmoebaDB:DDB_G0288185"/>
<dbReference type="HOGENOM" id="CLU_2431597_0_0_1"/>
<dbReference type="InParanoid" id="Q54JB1"/>
<dbReference type="PRO" id="PR:Q54JB1"/>
<dbReference type="Proteomes" id="UP000002195">
    <property type="component" value="Chromosome 5"/>
</dbReference>
<dbReference type="GO" id="GO:0016020">
    <property type="term" value="C:membrane"/>
    <property type="evidence" value="ECO:0007669"/>
    <property type="project" value="UniProtKB-SubCell"/>
</dbReference>
<evidence type="ECO:0000255" key="1"/>
<evidence type="ECO:0000305" key="2"/>
<gene>
    <name type="ORF">DDB_G0288185</name>
</gene>
<accession>Q54JB1</accession>
<comment type="subcellular location">
    <subcellularLocation>
        <location evidence="2">Membrane</location>
        <topology evidence="2">Single-pass membrane protein</topology>
    </subcellularLocation>
</comment>
<sequence>MTILGSISQIGSMKMGGSKSSFNGSSCGAGFGSNSSSSIISFFNPLLPVVAFISGTVTSITGLVAGALTGTVDGLGKGANTGILLGYTPNI</sequence>
<organism>
    <name type="scientific">Dictyostelium discoideum</name>
    <name type="common">Social amoeba</name>
    <dbReference type="NCBI Taxonomy" id="44689"/>
    <lineage>
        <taxon>Eukaryota</taxon>
        <taxon>Amoebozoa</taxon>
        <taxon>Evosea</taxon>
        <taxon>Eumycetozoa</taxon>
        <taxon>Dictyostelia</taxon>
        <taxon>Dictyosteliales</taxon>
        <taxon>Dictyosteliaceae</taxon>
        <taxon>Dictyostelium</taxon>
    </lineage>
</organism>